<feature type="chain" id="PRO_0000107053" description="Uncharacterized protein MJ0803">
    <location>
        <begin position="1"/>
        <end position="172"/>
    </location>
</feature>
<feature type="transmembrane region" description="Helical" evidence="1">
    <location>
        <begin position="7"/>
        <end position="27"/>
    </location>
</feature>
<feature type="transmembrane region" description="Helical" evidence="1">
    <location>
        <begin position="59"/>
        <end position="79"/>
    </location>
</feature>
<feature type="transmembrane region" description="Helical" evidence="1">
    <location>
        <begin position="89"/>
        <end position="109"/>
    </location>
</feature>
<dbReference type="EMBL" id="L77117">
    <property type="protein sequence ID" value="AAB98816.1"/>
    <property type="molecule type" value="Genomic_DNA"/>
</dbReference>
<dbReference type="PIR" id="C64400">
    <property type="entry name" value="C64400"/>
</dbReference>
<dbReference type="RefSeq" id="WP_010870313.1">
    <property type="nucleotide sequence ID" value="NC_000909.1"/>
</dbReference>
<dbReference type="STRING" id="243232.MJ_0803"/>
<dbReference type="PaxDb" id="243232-MJ_0803"/>
<dbReference type="EnsemblBacteria" id="AAB98816">
    <property type="protein sequence ID" value="AAB98816"/>
    <property type="gene ID" value="MJ_0803"/>
</dbReference>
<dbReference type="GeneID" id="1451685"/>
<dbReference type="KEGG" id="mja:MJ_0803"/>
<dbReference type="eggNOG" id="arCOG10950">
    <property type="taxonomic scope" value="Archaea"/>
</dbReference>
<dbReference type="HOGENOM" id="CLU_1493009_0_0_2"/>
<dbReference type="InParanoid" id="Q58213"/>
<dbReference type="OrthoDB" id="380462at2157"/>
<dbReference type="Proteomes" id="UP000000805">
    <property type="component" value="Chromosome"/>
</dbReference>
<dbReference type="GO" id="GO:0005886">
    <property type="term" value="C:plasma membrane"/>
    <property type="evidence" value="ECO:0007669"/>
    <property type="project" value="UniProtKB-SubCell"/>
</dbReference>
<dbReference type="InterPro" id="IPR043730">
    <property type="entry name" value="DUF5673"/>
</dbReference>
<dbReference type="Pfam" id="PF18923">
    <property type="entry name" value="DUF5673"/>
    <property type="match status" value="1"/>
</dbReference>
<evidence type="ECO:0000255" key="1"/>
<evidence type="ECO:0000305" key="2"/>
<comment type="subcellular location">
    <subcellularLocation>
        <location evidence="2">Cell membrane</location>
        <topology evidence="2">Multi-pass membrane protein</topology>
    </subcellularLocation>
</comment>
<comment type="similarity">
    <text evidence="2">To M.jannaschii MJ0695.</text>
</comment>
<name>Y803_METJA</name>
<proteinExistence type="predicted"/>
<gene>
    <name type="ordered locus">MJ0803</name>
</gene>
<accession>Q58213</accession>
<reference key="1">
    <citation type="journal article" date="1996" name="Science">
        <title>Complete genome sequence of the methanogenic archaeon, Methanococcus jannaschii.</title>
        <authorList>
            <person name="Bult C.J."/>
            <person name="White O."/>
            <person name="Olsen G.J."/>
            <person name="Zhou L."/>
            <person name="Fleischmann R.D."/>
            <person name="Sutton G.G."/>
            <person name="Blake J.A."/>
            <person name="FitzGerald L.M."/>
            <person name="Clayton R.A."/>
            <person name="Gocayne J.D."/>
            <person name="Kerlavage A.R."/>
            <person name="Dougherty B.A."/>
            <person name="Tomb J.-F."/>
            <person name="Adams M.D."/>
            <person name="Reich C.I."/>
            <person name="Overbeek R."/>
            <person name="Kirkness E.F."/>
            <person name="Weinstock K.G."/>
            <person name="Merrick J.M."/>
            <person name="Glodek A."/>
            <person name="Scott J.L."/>
            <person name="Geoghagen N.S.M."/>
            <person name="Weidman J.F."/>
            <person name="Fuhrmann J.L."/>
            <person name="Nguyen D."/>
            <person name="Utterback T.R."/>
            <person name="Kelley J.M."/>
            <person name="Peterson J.D."/>
            <person name="Sadow P.W."/>
            <person name="Hanna M.C."/>
            <person name="Cotton M.D."/>
            <person name="Roberts K.M."/>
            <person name="Hurst M.A."/>
            <person name="Kaine B.P."/>
            <person name="Borodovsky M."/>
            <person name="Klenk H.-P."/>
            <person name="Fraser C.M."/>
            <person name="Smith H.O."/>
            <person name="Woese C.R."/>
            <person name="Venter J.C."/>
        </authorList>
    </citation>
    <scope>NUCLEOTIDE SEQUENCE [LARGE SCALE GENOMIC DNA]</scope>
    <source>
        <strain>ATCC 43067 / DSM 2661 / JAL-1 / JCM 10045 / NBRC 100440</strain>
    </source>
</reference>
<organism>
    <name type="scientific">Methanocaldococcus jannaschii (strain ATCC 43067 / DSM 2661 / JAL-1 / JCM 10045 / NBRC 100440)</name>
    <name type="common">Methanococcus jannaschii</name>
    <dbReference type="NCBI Taxonomy" id="243232"/>
    <lineage>
        <taxon>Archaea</taxon>
        <taxon>Methanobacteriati</taxon>
        <taxon>Methanobacteriota</taxon>
        <taxon>Methanomada group</taxon>
        <taxon>Methanococci</taxon>
        <taxon>Methanococcales</taxon>
        <taxon>Methanocaldococcaceae</taxon>
        <taxon>Methanocaldococcus</taxon>
    </lineage>
</organism>
<keyword id="KW-1003">Cell membrane</keyword>
<keyword id="KW-0472">Membrane</keyword>
<keyword id="KW-1185">Reference proteome</keyword>
<keyword id="KW-0812">Transmembrane</keyword>
<keyword id="KW-1133">Transmembrane helix</keyword>
<sequence>MNSYGVILISYVGLIKLALAGILCYGIYLAIKSEKNLIKDALFVYKDNNFNVFGKKYALMIFLAFGFPIFFIGSFLYLFWEKLPEGFRFSLTFAITFFVLFIFGLLFVKYKIRVCKNGIYVGFRFITWKGFEGYKIENNKIILIGKKGVTYPVHLKYSKELEDIIKNYLKKI</sequence>
<protein>
    <recommendedName>
        <fullName>Uncharacterized protein MJ0803</fullName>
    </recommendedName>
</protein>